<sequence>MDSFPVINMEKLEGQERAATMKLINDACENWGFFELVNHSIPVELMDEVERLTKEHYKKCMEQRFKELMASKVEGAVVDANDMDWESTFFIRHLPVSNLSEIPDLTDEHRKVMKEFAEKLEKLAEQVLDLLCENLGLEKGYLKMAFAGTTTGLPTFGTKVSNYPPCPRPELFKGLRAHTDAGGLILLFQDDRVAGLQLLKDGEWVDVPPMNHSIVINLGDQVEVITNGKYKSVMHRVVAQTDGNRMSLASFYNPGSDAVIFPAPALVEKEAEEKKEVYPKFVFEDYMNLYAGLKFQAKEPRFEVMKMKAVETANLSPITT</sequence>
<dbReference type="EC" id="1.14.17.4"/>
<dbReference type="EMBL" id="M32692">
    <property type="protein sequence ID" value="AAA32911.1"/>
    <property type="molecule type" value="mRNA"/>
</dbReference>
<dbReference type="PIR" id="S11879">
    <property type="entry name" value="S11879"/>
</dbReference>
<dbReference type="SMR" id="P19464"/>
<dbReference type="OMA" id="TMAMIND"/>
<dbReference type="OrthoDB" id="288590at2759"/>
<dbReference type="SABIO-RK" id="P19464"/>
<dbReference type="UniPathway" id="UPA00384">
    <property type="reaction ID" value="UER00563"/>
</dbReference>
<dbReference type="GO" id="GO:0009815">
    <property type="term" value="F:1-aminocyclopropane-1-carboxylate oxidase activity"/>
    <property type="evidence" value="ECO:0007669"/>
    <property type="project" value="UniProtKB-EC"/>
</dbReference>
<dbReference type="GO" id="GO:0031418">
    <property type="term" value="F:L-ascorbic acid binding"/>
    <property type="evidence" value="ECO:0007669"/>
    <property type="project" value="UniProtKB-KW"/>
</dbReference>
<dbReference type="GO" id="GO:0046872">
    <property type="term" value="F:metal ion binding"/>
    <property type="evidence" value="ECO:0007669"/>
    <property type="project" value="UniProtKB-KW"/>
</dbReference>
<dbReference type="GO" id="GO:0009693">
    <property type="term" value="P:ethylene biosynthetic process"/>
    <property type="evidence" value="ECO:0007669"/>
    <property type="project" value="UniProtKB-UniPathway"/>
</dbReference>
<dbReference type="GO" id="GO:0009835">
    <property type="term" value="P:fruit ripening"/>
    <property type="evidence" value="ECO:0007669"/>
    <property type="project" value="UniProtKB-KW"/>
</dbReference>
<dbReference type="FunFam" id="2.60.120.330:FF:000002">
    <property type="entry name" value="1-aminocyclopropane-1-carboxylate oxidase 1"/>
    <property type="match status" value="1"/>
</dbReference>
<dbReference type="Gene3D" id="2.60.120.330">
    <property type="entry name" value="B-lactam Antibiotic, Isopenicillin N Synthase, Chain"/>
    <property type="match status" value="1"/>
</dbReference>
<dbReference type="InterPro" id="IPR026992">
    <property type="entry name" value="DIOX_N"/>
</dbReference>
<dbReference type="InterPro" id="IPR044861">
    <property type="entry name" value="IPNS-like_FE2OG_OXY"/>
</dbReference>
<dbReference type="InterPro" id="IPR027443">
    <property type="entry name" value="IPNS-like_sf"/>
</dbReference>
<dbReference type="InterPro" id="IPR005123">
    <property type="entry name" value="Oxoglu/Fe-dep_dioxygenase_dom"/>
</dbReference>
<dbReference type="InterPro" id="IPR050295">
    <property type="entry name" value="Plant_2OG-oxidoreductases"/>
</dbReference>
<dbReference type="PANTHER" id="PTHR47991">
    <property type="entry name" value="OXOGLUTARATE/IRON-DEPENDENT DIOXYGENASE"/>
    <property type="match status" value="1"/>
</dbReference>
<dbReference type="Pfam" id="PF03171">
    <property type="entry name" value="2OG-FeII_Oxy"/>
    <property type="match status" value="1"/>
</dbReference>
<dbReference type="Pfam" id="PF14226">
    <property type="entry name" value="DIOX_N"/>
    <property type="match status" value="1"/>
</dbReference>
<dbReference type="SUPFAM" id="SSF51197">
    <property type="entry name" value="Clavaminate synthase-like"/>
    <property type="match status" value="1"/>
</dbReference>
<dbReference type="PROSITE" id="PS51471">
    <property type="entry name" value="FE2OG_OXY"/>
    <property type="match status" value="1"/>
</dbReference>
<protein>
    <recommendedName>
        <fullName>1-aminocyclopropane-1-carboxylate oxidase</fullName>
        <shortName>ACC oxidase</shortName>
        <ecNumber>1.14.17.4</ecNumber>
    </recommendedName>
    <alternativeName>
        <fullName>Ethylene-forming enzyme</fullName>
        <shortName>EFE</shortName>
    </alternativeName>
    <alternativeName>
        <fullName>Ripening-related protein PAVOE3</fullName>
    </alternativeName>
</protein>
<feature type="chain" id="PRO_0000067270" description="1-aminocyclopropane-1-carboxylate oxidase">
    <location>
        <begin position="1"/>
        <end position="320"/>
    </location>
</feature>
<feature type="domain" description="Fe2OG dioxygenase" evidence="1">
    <location>
        <begin position="154"/>
        <end position="254"/>
    </location>
</feature>
<feature type="binding site" evidence="1">
    <location>
        <position position="178"/>
    </location>
    <ligand>
        <name>Fe cation</name>
        <dbReference type="ChEBI" id="CHEBI:24875"/>
    </ligand>
</feature>
<feature type="binding site" evidence="1">
    <location>
        <position position="180"/>
    </location>
    <ligand>
        <name>Fe cation</name>
        <dbReference type="ChEBI" id="CHEBI:24875"/>
    </ligand>
</feature>
<feature type="binding site" evidence="1">
    <location>
        <position position="235"/>
    </location>
    <ligand>
        <name>Fe cation</name>
        <dbReference type="ChEBI" id="CHEBI:24875"/>
    </ligand>
</feature>
<proteinExistence type="evidence at transcript level"/>
<comment type="catalytic activity">
    <reaction>
        <text>1-aminocyclopropane-1-carboxylate + L-ascorbate + O2 = ethene + L-dehydroascorbate + hydrogen cyanide + CO2 + 2 H2O</text>
        <dbReference type="Rhea" id="RHEA:23640"/>
        <dbReference type="ChEBI" id="CHEBI:15377"/>
        <dbReference type="ChEBI" id="CHEBI:15379"/>
        <dbReference type="ChEBI" id="CHEBI:16526"/>
        <dbReference type="ChEBI" id="CHEBI:18153"/>
        <dbReference type="ChEBI" id="CHEBI:18407"/>
        <dbReference type="ChEBI" id="CHEBI:38290"/>
        <dbReference type="ChEBI" id="CHEBI:58360"/>
        <dbReference type="ChEBI" id="CHEBI:58539"/>
        <dbReference type="EC" id="1.14.17.4"/>
    </reaction>
</comment>
<comment type="cofactor">
    <cofactor>
        <name>Fe cation</name>
        <dbReference type="ChEBI" id="CHEBI:24875"/>
    </cofactor>
</comment>
<comment type="pathway">
    <text>Alkene biosynthesis; ethylene biosynthesis via S-adenosyl-L-methionine; ethylene from S-adenosyl-L-methionine: step 2/2.</text>
</comment>
<comment type="developmental stage">
    <text>Expressed during fruit ripening.</text>
</comment>
<comment type="similarity">
    <text evidence="2">Belongs to the iron/ascorbate-dependent oxidoreductase family.</text>
</comment>
<gene>
    <name type="primary">ACO</name>
</gene>
<reference key="1">
    <citation type="journal article" date="1990" name="Plant Mol. Biol.">
        <title>Nucleotide sequence of a ripening-related cDNA from avocado fruit.</title>
        <authorList>
            <person name="McGarvey D.J."/>
            <person name="Yu H."/>
            <person name="Christoffersen R.E."/>
        </authorList>
    </citation>
    <scope>NUCLEOTIDE SEQUENCE [MRNA]</scope>
</reference>
<name>ACCO_PERAE</name>
<organism>
    <name type="scientific">Persea americana</name>
    <name type="common">Avocado</name>
    <dbReference type="NCBI Taxonomy" id="3435"/>
    <lineage>
        <taxon>Eukaryota</taxon>
        <taxon>Viridiplantae</taxon>
        <taxon>Streptophyta</taxon>
        <taxon>Embryophyta</taxon>
        <taxon>Tracheophyta</taxon>
        <taxon>Spermatophyta</taxon>
        <taxon>Magnoliopsida</taxon>
        <taxon>Magnoliidae</taxon>
        <taxon>Laurales</taxon>
        <taxon>Lauraceae</taxon>
        <taxon>Persea</taxon>
    </lineage>
</organism>
<keyword id="KW-0266">Ethylene biosynthesis</keyword>
<keyword id="KW-0292">Fruit ripening</keyword>
<keyword id="KW-0408">Iron</keyword>
<keyword id="KW-0479">Metal-binding</keyword>
<keyword id="KW-0560">Oxidoreductase</keyword>
<keyword id="KW-0847">Vitamin C</keyword>
<accession>P19464</accession>
<evidence type="ECO:0000255" key="1">
    <source>
        <dbReference type="PROSITE-ProRule" id="PRU00805"/>
    </source>
</evidence>
<evidence type="ECO:0000305" key="2"/>